<protein>
    <recommendedName>
        <fullName evidence="1">2-C-methyl-D-erythritol 4-phosphate cytidylyltransferase</fullName>
        <ecNumber evidence="1">2.7.7.60</ecNumber>
    </recommendedName>
    <alternativeName>
        <fullName evidence="1">4-diphosphocytidyl-2C-methyl-D-erythritol synthase</fullName>
    </alternativeName>
    <alternativeName>
        <fullName evidence="1">MEP cytidylyltransferase</fullName>
        <shortName evidence="1">MCT</shortName>
    </alternativeName>
</protein>
<sequence>MDKVAAVVAAAGRGSRMGTETRKQYLSLAGLPVVGHVLRAMEASSAVKSVVTVVAPGEENYFRLTVVERLGIRKVAAIVPGGEERQDSVYNGLLALAPDTGIVVVHDGARPLLSPGDINAVVQAAAAYGAATLAVPVKDTVKMAGRDGFVLRTLSREHLWLVQTPQAFRYDIIMNAHRQARQKKYAATDDAGLVELLGRPVKIVAGSYENIKITTPEDLTVAEAVIKARQGRLAEAGG</sequence>
<name>ISPD_PELTS</name>
<feature type="chain" id="PRO_1000075937" description="2-C-methyl-D-erythritol 4-phosphate cytidylyltransferase">
    <location>
        <begin position="1"/>
        <end position="238"/>
    </location>
</feature>
<feature type="site" description="Transition state stabilizer" evidence="1">
    <location>
        <position position="16"/>
    </location>
</feature>
<feature type="site" description="Transition state stabilizer" evidence="1">
    <location>
        <position position="23"/>
    </location>
</feature>
<feature type="site" description="Positions MEP for the nucleophilic attack" evidence="1">
    <location>
        <position position="156"/>
    </location>
</feature>
<feature type="site" description="Positions MEP for the nucleophilic attack" evidence="1">
    <location>
        <position position="212"/>
    </location>
</feature>
<proteinExistence type="inferred from homology"/>
<accession>A5D5L4</accession>
<dbReference type="EC" id="2.7.7.60" evidence="1"/>
<dbReference type="EMBL" id="AP009389">
    <property type="protein sequence ID" value="BAF58470.1"/>
    <property type="molecule type" value="Genomic_DNA"/>
</dbReference>
<dbReference type="SMR" id="A5D5L4"/>
<dbReference type="STRING" id="370438.PTH_0289"/>
<dbReference type="KEGG" id="pth:PTH_0289"/>
<dbReference type="eggNOG" id="COG1211">
    <property type="taxonomic scope" value="Bacteria"/>
</dbReference>
<dbReference type="HOGENOM" id="CLU_061281_2_2_9"/>
<dbReference type="UniPathway" id="UPA00056">
    <property type="reaction ID" value="UER00093"/>
</dbReference>
<dbReference type="Proteomes" id="UP000006556">
    <property type="component" value="Chromosome"/>
</dbReference>
<dbReference type="GO" id="GO:0050518">
    <property type="term" value="F:2-C-methyl-D-erythritol 4-phosphate cytidylyltransferase activity"/>
    <property type="evidence" value="ECO:0007669"/>
    <property type="project" value="UniProtKB-UniRule"/>
</dbReference>
<dbReference type="GO" id="GO:0019288">
    <property type="term" value="P:isopentenyl diphosphate biosynthetic process, methylerythritol 4-phosphate pathway"/>
    <property type="evidence" value="ECO:0007669"/>
    <property type="project" value="UniProtKB-UniRule"/>
</dbReference>
<dbReference type="CDD" id="cd02516">
    <property type="entry name" value="CDP-ME_synthetase"/>
    <property type="match status" value="1"/>
</dbReference>
<dbReference type="FunFam" id="3.90.550.10:FF:000003">
    <property type="entry name" value="2-C-methyl-D-erythritol 4-phosphate cytidylyltransferase"/>
    <property type="match status" value="1"/>
</dbReference>
<dbReference type="Gene3D" id="3.90.550.10">
    <property type="entry name" value="Spore Coat Polysaccharide Biosynthesis Protein SpsA, Chain A"/>
    <property type="match status" value="1"/>
</dbReference>
<dbReference type="HAMAP" id="MF_00108">
    <property type="entry name" value="IspD"/>
    <property type="match status" value="1"/>
</dbReference>
<dbReference type="InterPro" id="IPR001228">
    <property type="entry name" value="IspD"/>
</dbReference>
<dbReference type="InterPro" id="IPR034683">
    <property type="entry name" value="IspD/TarI"/>
</dbReference>
<dbReference type="InterPro" id="IPR050088">
    <property type="entry name" value="IspD/TarI_cytidylyltransf_bact"/>
</dbReference>
<dbReference type="InterPro" id="IPR018294">
    <property type="entry name" value="ISPD_synthase_CS"/>
</dbReference>
<dbReference type="InterPro" id="IPR029044">
    <property type="entry name" value="Nucleotide-diphossugar_trans"/>
</dbReference>
<dbReference type="NCBIfam" id="TIGR00453">
    <property type="entry name" value="ispD"/>
    <property type="match status" value="1"/>
</dbReference>
<dbReference type="PANTHER" id="PTHR32125">
    <property type="entry name" value="2-C-METHYL-D-ERYTHRITOL 4-PHOSPHATE CYTIDYLYLTRANSFERASE, CHLOROPLASTIC"/>
    <property type="match status" value="1"/>
</dbReference>
<dbReference type="PANTHER" id="PTHR32125:SF4">
    <property type="entry name" value="2-C-METHYL-D-ERYTHRITOL 4-PHOSPHATE CYTIDYLYLTRANSFERASE, CHLOROPLASTIC"/>
    <property type="match status" value="1"/>
</dbReference>
<dbReference type="Pfam" id="PF01128">
    <property type="entry name" value="IspD"/>
    <property type="match status" value="1"/>
</dbReference>
<dbReference type="SUPFAM" id="SSF53448">
    <property type="entry name" value="Nucleotide-diphospho-sugar transferases"/>
    <property type="match status" value="1"/>
</dbReference>
<dbReference type="PROSITE" id="PS01295">
    <property type="entry name" value="ISPD"/>
    <property type="match status" value="1"/>
</dbReference>
<reference key="1">
    <citation type="journal article" date="2008" name="Genome Res.">
        <title>The genome of Pelotomaculum thermopropionicum reveals niche-associated evolution in anaerobic microbiota.</title>
        <authorList>
            <person name="Kosaka T."/>
            <person name="Kato S."/>
            <person name="Shimoyama T."/>
            <person name="Ishii S."/>
            <person name="Abe T."/>
            <person name="Watanabe K."/>
        </authorList>
    </citation>
    <scope>NUCLEOTIDE SEQUENCE [LARGE SCALE GENOMIC DNA]</scope>
    <source>
        <strain>DSM 13744 / JCM 10971 / SI</strain>
    </source>
</reference>
<keyword id="KW-0414">Isoprene biosynthesis</keyword>
<keyword id="KW-0548">Nucleotidyltransferase</keyword>
<keyword id="KW-1185">Reference proteome</keyword>
<keyword id="KW-0808">Transferase</keyword>
<evidence type="ECO:0000255" key="1">
    <source>
        <dbReference type="HAMAP-Rule" id="MF_00108"/>
    </source>
</evidence>
<gene>
    <name evidence="1" type="primary">ispD</name>
    <name type="ordered locus">PTH_0289</name>
</gene>
<organism>
    <name type="scientific">Pelotomaculum thermopropionicum (strain DSM 13744 / JCM 10971 / SI)</name>
    <dbReference type="NCBI Taxonomy" id="370438"/>
    <lineage>
        <taxon>Bacteria</taxon>
        <taxon>Bacillati</taxon>
        <taxon>Bacillota</taxon>
        <taxon>Clostridia</taxon>
        <taxon>Eubacteriales</taxon>
        <taxon>Desulfotomaculaceae</taxon>
        <taxon>Pelotomaculum</taxon>
    </lineage>
</organism>
<comment type="function">
    <text evidence="1">Catalyzes the formation of 4-diphosphocytidyl-2-C-methyl-D-erythritol from CTP and 2-C-methyl-D-erythritol 4-phosphate (MEP).</text>
</comment>
<comment type="catalytic activity">
    <reaction evidence="1">
        <text>2-C-methyl-D-erythritol 4-phosphate + CTP + H(+) = 4-CDP-2-C-methyl-D-erythritol + diphosphate</text>
        <dbReference type="Rhea" id="RHEA:13429"/>
        <dbReference type="ChEBI" id="CHEBI:15378"/>
        <dbReference type="ChEBI" id="CHEBI:33019"/>
        <dbReference type="ChEBI" id="CHEBI:37563"/>
        <dbReference type="ChEBI" id="CHEBI:57823"/>
        <dbReference type="ChEBI" id="CHEBI:58262"/>
        <dbReference type="EC" id="2.7.7.60"/>
    </reaction>
</comment>
<comment type="pathway">
    <text evidence="1">Isoprenoid biosynthesis; isopentenyl diphosphate biosynthesis via DXP pathway; isopentenyl diphosphate from 1-deoxy-D-xylulose 5-phosphate: step 2/6.</text>
</comment>
<comment type="similarity">
    <text evidence="1">Belongs to the IspD/TarI cytidylyltransferase family. IspD subfamily.</text>
</comment>